<organism>
    <name type="scientific">Xanthomonas oryzae pv. oryzae (strain MAFF 311018)</name>
    <dbReference type="NCBI Taxonomy" id="342109"/>
    <lineage>
        <taxon>Bacteria</taxon>
        <taxon>Pseudomonadati</taxon>
        <taxon>Pseudomonadota</taxon>
        <taxon>Gammaproteobacteria</taxon>
        <taxon>Lysobacterales</taxon>
        <taxon>Lysobacteraceae</taxon>
        <taxon>Xanthomonas</taxon>
    </lineage>
</organism>
<accession>Q2NXR3</accession>
<proteinExistence type="inferred from homology"/>
<reference key="1">
    <citation type="journal article" date="2005" name="Jpn. Agric. Res. Q.">
        <title>Genome sequence of Xanthomonas oryzae pv. oryzae suggests contribution of large numbers of effector genes and insertion sequences to its race diversity.</title>
        <authorList>
            <person name="Ochiai H."/>
            <person name="Inoue Y."/>
            <person name="Takeya M."/>
            <person name="Sasaki A."/>
            <person name="Kaku H."/>
        </authorList>
    </citation>
    <scope>NUCLEOTIDE SEQUENCE [LARGE SCALE GENOMIC DNA]</scope>
    <source>
        <strain>MAFF 311018</strain>
    </source>
</reference>
<name>TTCA_XANOM</name>
<gene>
    <name evidence="1" type="primary">ttcA</name>
    <name type="ordered locus">XOO4159</name>
</gene>
<keyword id="KW-0004">4Fe-4S</keyword>
<keyword id="KW-0067">ATP-binding</keyword>
<keyword id="KW-0963">Cytoplasm</keyword>
<keyword id="KW-0408">Iron</keyword>
<keyword id="KW-0411">Iron-sulfur</keyword>
<keyword id="KW-0460">Magnesium</keyword>
<keyword id="KW-0479">Metal-binding</keyword>
<keyword id="KW-0547">Nucleotide-binding</keyword>
<keyword id="KW-0694">RNA-binding</keyword>
<keyword id="KW-0808">Transferase</keyword>
<keyword id="KW-0819">tRNA processing</keyword>
<keyword id="KW-0820">tRNA-binding</keyword>
<dbReference type="EC" id="2.8.1.-" evidence="1"/>
<dbReference type="EMBL" id="AP008229">
    <property type="protein sequence ID" value="BAE70914.1"/>
    <property type="molecule type" value="Genomic_DNA"/>
</dbReference>
<dbReference type="RefSeq" id="WP_011260702.1">
    <property type="nucleotide sequence ID" value="NC_007705.1"/>
</dbReference>
<dbReference type="SMR" id="Q2NXR3"/>
<dbReference type="KEGG" id="xom:XOO4159"/>
<dbReference type="HOGENOM" id="CLU_026481_0_1_6"/>
<dbReference type="GO" id="GO:0005737">
    <property type="term" value="C:cytoplasm"/>
    <property type="evidence" value="ECO:0007669"/>
    <property type="project" value="UniProtKB-SubCell"/>
</dbReference>
<dbReference type="GO" id="GO:0051539">
    <property type="term" value="F:4 iron, 4 sulfur cluster binding"/>
    <property type="evidence" value="ECO:0007669"/>
    <property type="project" value="UniProtKB-UniRule"/>
</dbReference>
<dbReference type="GO" id="GO:0005524">
    <property type="term" value="F:ATP binding"/>
    <property type="evidence" value="ECO:0007669"/>
    <property type="project" value="UniProtKB-UniRule"/>
</dbReference>
<dbReference type="GO" id="GO:0000287">
    <property type="term" value="F:magnesium ion binding"/>
    <property type="evidence" value="ECO:0007669"/>
    <property type="project" value="UniProtKB-UniRule"/>
</dbReference>
<dbReference type="GO" id="GO:0016783">
    <property type="term" value="F:sulfurtransferase activity"/>
    <property type="evidence" value="ECO:0007669"/>
    <property type="project" value="UniProtKB-UniRule"/>
</dbReference>
<dbReference type="GO" id="GO:0000049">
    <property type="term" value="F:tRNA binding"/>
    <property type="evidence" value="ECO:0007669"/>
    <property type="project" value="UniProtKB-KW"/>
</dbReference>
<dbReference type="GO" id="GO:0034227">
    <property type="term" value="P:tRNA thio-modification"/>
    <property type="evidence" value="ECO:0007669"/>
    <property type="project" value="UniProtKB-UniRule"/>
</dbReference>
<dbReference type="CDD" id="cd24138">
    <property type="entry name" value="TtcA-like"/>
    <property type="match status" value="1"/>
</dbReference>
<dbReference type="Gene3D" id="3.40.50.620">
    <property type="entry name" value="HUPs"/>
    <property type="match status" value="1"/>
</dbReference>
<dbReference type="HAMAP" id="MF_01850">
    <property type="entry name" value="TtcA"/>
    <property type="match status" value="1"/>
</dbReference>
<dbReference type="InterPro" id="IPR014729">
    <property type="entry name" value="Rossmann-like_a/b/a_fold"/>
</dbReference>
<dbReference type="InterPro" id="IPR011063">
    <property type="entry name" value="TilS/TtcA_N"/>
</dbReference>
<dbReference type="InterPro" id="IPR012089">
    <property type="entry name" value="tRNA_Cyd_32_2_STrfase"/>
</dbReference>
<dbReference type="InterPro" id="IPR035107">
    <property type="entry name" value="tRNA_thiolation_TtcA_Ctu1"/>
</dbReference>
<dbReference type="NCBIfam" id="NF007972">
    <property type="entry name" value="PRK10696.1"/>
    <property type="match status" value="1"/>
</dbReference>
<dbReference type="PANTHER" id="PTHR43686:SF1">
    <property type="entry name" value="AMINOTRAN_5 DOMAIN-CONTAINING PROTEIN"/>
    <property type="match status" value="1"/>
</dbReference>
<dbReference type="PANTHER" id="PTHR43686">
    <property type="entry name" value="SULFURTRANSFERASE-RELATED"/>
    <property type="match status" value="1"/>
</dbReference>
<dbReference type="Pfam" id="PF01171">
    <property type="entry name" value="ATP_bind_3"/>
    <property type="match status" value="1"/>
</dbReference>
<dbReference type="PIRSF" id="PIRSF004976">
    <property type="entry name" value="ATPase_YdaO"/>
    <property type="match status" value="1"/>
</dbReference>
<dbReference type="SUPFAM" id="SSF52402">
    <property type="entry name" value="Adenine nucleotide alpha hydrolases-like"/>
    <property type="match status" value="1"/>
</dbReference>
<sequence>MTAVLPLPHPLADPAPRDPRQRLQREQLRLGKRLQRQVGQAIADFGMISPGDKIMVCLSGGKDSYTMLDMLLQLQRKAPVPFTLVAVNLDQKQPDFPAHVLPAYLDALGVPFDIVEQDTYSVVSRVVPAGKTMCSLCSRLRRGALYAYAQTHGVTKIALGHHRDDIVATFFMNLFHHARLAAMAPKLRSDDGAHVVIRPLAYVREAHIAAYAQARQFPIIPCNLCGSQENLQRQQVGKMLQHWDHEQPGRVEQIARALGDVRPEQLADRTLFDFLALGRSGDAPPDLAPDPGAWLTASDATHDSD</sequence>
<comment type="function">
    <text evidence="1">Catalyzes the ATP-dependent 2-thiolation of cytidine in position 32 of tRNA, to form 2-thiocytidine (s(2)C32). The sulfur atoms are provided by the cysteine/cysteine desulfurase (IscS) system.</text>
</comment>
<comment type="catalytic activity">
    <reaction evidence="1">
        <text>cytidine(32) in tRNA + S-sulfanyl-L-cysteinyl-[cysteine desulfurase] + AH2 + ATP = 2-thiocytidine(32) in tRNA + L-cysteinyl-[cysteine desulfurase] + A + AMP + diphosphate + H(+)</text>
        <dbReference type="Rhea" id="RHEA:57048"/>
        <dbReference type="Rhea" id="RHEA-COMP:10288"/>
        <dbReference type="Rhea" id="RHEA-COMP:12157"/>
        <dbReference type="Rhea" id="RHEA-COMP:12158"/>
        <dbReference type="Rhea" id="RHEA-COMP:14821"/>
        <dbReference type="ChEBI" id="CHEBI:13193"/>
        <dbReference type="ChEBI" id="CHEBI:15378"/>
        <dbReference type="ChEBI" id="CHEBI:17499"/>
        <dbReference type="ChEBI" id="CHEBI:29950"/>
        <dbReference type="ChEBI" id="CHEBI:30616"/>
        <dbReference type="ChEBI" id="CHEBI:33019"/>
        <dbReference type="ChEBI" id="CHEBI:61963"/>
        <dbReference type="ChEBI" id="CHEBI:82748"/>
        <dbReference type="ChEBI" id="CHEBI:141453"/>
        <dbReference type="ChEBI" id="CHEBI:456215"/>
    </reaction>
    <physiologicalReaction direction="left-to-right" evidence="1">
        <dbReference type="Rhea" id="RHEA:57049"/>
    </physiologicalReaction>
</comment>
<comment type="cofactor">
    <cofactor evidence="1">
        <name>Mg(2+)</name>
        <dbReference type="ChEBI" id="CHEBI:18420"/>
    </cofactor>
</comment>
<comment type="cofactor">
    <cofactor evidence="1">
        <name>[4Fe-4S] cluster</name>
        <dbReference type="ChEBI" id="CHEBI:49883"/>
    </cofactor>
    <text evidence="1">Binds 1 [4Fe-4S] cluster per subunit. The cluster is chelated by three Cys residues, the fourth Fe has a free coordination site that may bind a sulfur atom transferred from the persulfide of IscS.</text>
</comment>
<comment type="pathway">
    <text evidence="1">tRNA modification.</text>
</comment>
<comment type="subunit">
    <text evidence="1">Homodimer.</text>
</comment>
<comment type="subcellular location">
    <subcellularLocation>
        <location evidence="1">Cytoplasm</location>
    </subcellularLocation>
</comment>
<comment type="miscellaneous">
    <text evidence="1">The thiolation reaction likely consists of two steps: a first activation step by ATP to form an adenylated intermediate of the target base of tRNA, and a second nucleophilic substitution step of the sulfur (S) atom supplied by the hydrosulfide attached to the Fe-S cluster.</text>
</comment>
<comment type="similarity">
    <text evidence="1">Belongs to the TtcA family.</text>
</comment>
<evidence type="ECO:0000255" key="1">
    <source>
        <dbReference type="HAMAP-Rule" id="MF_01850"/>
    </source>
</evidence>
<evidence type="ECO:0000256" key="2">
    <source>
        <dbReference type="SAM" id="MobiDB-lite"/>
    </source>
</evidence>
<protein>
    <recommendedName>
        <fullName evidence="1">tRNA-cytidine(32) 2-sulfurtransferase</fullName>
        <ecNumber evidence="1">2.8.1.-</ecNumber>
    </recommendedName>
    <alternativeName>
        <fullName evidence="1">Two-thiocytidine biosynthesis protein A</fullName>
    </alternativeName>
    <alternativeName>
        <fullName evidence="1">tRNA 2-thiocytidine biosynthesis protein TtcA</fullName>
    </alternativeName>
</protein>
<feature type="chain" id="PRO_0000348874" description="tRNA-cytidine(32) 2-sulfurtransferase">
    <location>
        <begin position="1"/>
        <end position="305"/>
    </location>
</feature>
<feature type="region of interest" description="Disordered" evidence="2">
    <location>
        <begin position="1"/>
        <end position="20"/>
    </location>
</feature>
<feature type="region of interest" description="Disordered" evidence="2">
    <location>
        <begin position="282"/>
        <end position="305"/>
    </location>
</feature>
<feature type="short sequence motif" description="PP-loop motif" evidence="1">
    <location>
        <begin position="59"/>
        <end position="64"/>
    </location>
</feature>
<feature type="compositionally biased region" description="Low complexity" evidence="2">
    <location>
        <begin position="282"/>
        <end position="293"/>
    </location>
</feature>
<feature type="binding site" evidence="1">
    <location>
        <position position="134"/>
    </location>
    <ligand>
        <name>[4Fe-4S] cluster</name>
        <dbReference type="ChEBI" id="CHEBI:49883"/>
    </ligand>
</feature>
<feature type="binding site" evidence="1">
    <location>
        <position position="137"/>
    </location>
    <ligand>
        <name>[4Fe-4S] cluster</name>
        <dbReference type="ChEBI" id="CHEBI:49883"/>
    </ligand>
</feature>
<feature type="binding site" evidence="1">
    <location>
        <position position="225"/>
    </location>
    <ligand>
        <name>[4Fe-4S] cluster</name>
        <dbReference type="ChEBI" id="CHEBI:49883"/>
    </ligand>
</feature>